<comment type="subcellular location">
    <subcellularLocation>
        <location evidence="1">Cell membrane</location>
        <topology evidence="1">Multi-pass membrane protein</topology>
    </subcellularLocation>
</comment>
<comment type="similarity">
    <text evidence="1">Belongs to the UPF0295 family.</text>
</comment>
<organism>
    <name type="scientific">Bacillus cereus (strain ATCC 10987 / NRS 248)</name>
    <dbReference type="NCBI Taxonomy" id="222523"/>
    <lineage>
        <taxon>Bacteria</taxon>
        <taxon>Bacillati</taxon>
        <taxon>Bacillota</taxon>
        <taxon>Bacilli</taxon>
        <taxon>Bacillales</taxon>
        <taxon>Bacillaceae</taxon>
        <taxon>Bacillus</taxon>
        <taxon>Bacillus cereus group</taxon>
    </lineage>
</organism>
<accession>Q73DW7</accession>
<protein>
    <recommendedName>
        <fullName evidence="1">UPF0295 protein BCE_0593</fullName>
    </recommendedName>
</protein>
<sequence length="118" mass="13530">MGIKYSNKINKIRTFALSLVFIGLFIAYLGVFFRENIIIMTTFMMVGFLAVIASTVVYFWIGMLSTKTVQIICPSCDKPTKMLGRVDACMHCNQPLTMDRNLEGKEFDEKYNKKSYKS</sequence>
<evidence type="ECO:0000255" key="1">
    <source>
        <dbReference type="HAMAP-Rule" id="MF_01502"/>
    </source>
</evidence>
<feature type="chain" id="PRO_0000053848" description="UPF0295 protein BCE_0593">
    <location>
        <begin position="1"/>
        <end position="118"/>
    </location>
</feature>
<feature type="transmembrane region" description="Helical" evidence="1">
    <location>
        <begin position="12"/>
        <end position="32"/>
    </location>
</feature>
<feature type="transmembrane region" description="Helical" evidence="1">
    <location>
        <begin position="43"/>
        <end position="63"/>
    </location>
</feature>
<dbReference type="EMBL" id="AE017194">
    <property type="protein sequence ID" value="AAS39528.1"/>
    <property type="molecule type" value="Genomic_DNA"/>
</dbReference>
<dbReference type="SMR" id="Q73DW7"/>
<dbReference type="KEGG" id="bca:BCE_0593"/>
<dbReference type="HOGENOM" id="CLU_143991_0_0_9"/>
<dbReference type="Proteomes" id="UP000002527">
    <property type="component" value="Chromosome"/>
</dbReference>
<dbReference type="GO" id="GO:0005886">
    <property type="term" value="C:plasma membrane"/>
    <property type="evidence" value="ECO:0007669"/>
    <property type="project" value="UniProtKB-SubCell"/>
</dbReference>
<dbReference type="HAMAP" id="MF_01502">
    <property type="entry name" value="UPF0295"/>
    <property type="match status" value="1"/>
</dbReference>
<dbReference type="InterPro" id="IPR020912">
    <property type="entry name" value="UPF0295"/>
</dbReference>
<dbReference type="NCBIfam" id="NF002796">
    <property type="entry name" value="PRK02935.1"/>
    <property type="match status" value="1"/>
</dbReference>
<dbReference type="Pfam" id="PF11023">
    <property type="entry name" value="DUF2614"/>
    <property type="match status" value="1"/>
</dbReference>
<gene>
    <name type="ordered locus">BCE_0593</name>
</gene>
<reference key="1">
    <citation type="journal article" date="2004" name="Nucleic Acids Res.">
        <title>The genome sequence of Bacillus cereus ATCC 10987 reveals metabolic adaptations and a large plasmid related to Bacillus anthracis pXO1.</title>
        <authorList>
            <person name="Rasko D.A."/>
            <person name="Ravel J."/>
            <person name="Oekstad O.A."/>
            <person name="Helgason E."/>
            <person name="Cer R.Z."/>
            <person name="Jiang L."/>
            <person name="Shores K.A."/>
            <person name="Fouts D.E."/>
            <person name="Tourasse N.J."/>
            <person name="Angiuoli S.V."/>
            <person name="Kolonay J.F."/>
            <person name="Nelson W.C."/>
            <person name="Kolstoe A.-B."/>
            <person name="Fraser C.M."/>
            <person name="Read T.D."/>
        </authorList>
    </citation>
    <scope>NUCLEOTIDE SEQUENCE [LARGE SCALE GENOMIC DNA]</scope>
    <source>
        <strain>ATCC 10987 / NRS 248</strain>
    </source>
</reference>
<name>Y593_BACC1</name>
<proteinExistence type="inferred from homology"/>
<keyword id="KW-1003">Cell membrane</keyword>
<keyword id="KW-0472">Membrane</keyword>
<keyword id="KW-0812">Transmembrane</keyword>
<keyword id="KW-1133">Transmembrane helix</keyword>